<dbReference type="EMBL" id="CP000053">
    <property type="protein sequence ID" value="AAY60936.1"/>
    <property type="molecule type" value="Genomic_DNA"/>
</dbReference>
<dbReference type="SMR" id="Q4UNC2"/>
<dbReference type="STRING" id="315456.RF_0085"/>
<dbReference type="KEGG" id="rfe:RF_0085"/>
<dbReference type="eggNOG" id="COG0218">
    <property type="taxonomic scope" value="Bacteria"/>
</dbReference>
<dbReference type="HOGENOM" id="CLU_033732_2_0_5"/>
<dbReference type="OrthoDB" id="9804921at2"/>
<dbReference type="Proteomes" id="UP000008548">
    <property type="component" value="Chromosome"/>
</dbReference>
<dbReference type="GO" id="GO:0005525">
    <property type="term" value="F:GTP binding"/>
    <property type="evidence" value="ECO:0007669"/>
    <property type="project" value="UniProtKB-UniRule"/>
</dbReference>
<dbReference type="GO" id="GO:0046872">
    <property type="term" value="F:metal ion binding"/>
    <property type="evidence" value="ECO:0007669"/>
    <property type="project" value="UniProtKB-KW"/>
</dbReference>
<dbReference type="GO" id="GO:0000917">
    <property type="term" value="P:division septum assembly"/>
    <property type="evidence" value="ECO:0007669"/>
    <property type="project" value="UniProtKB-KW"/>
</dbReference>
<dbReference type="CDD" id="cd01876">
    <property type="entry name" value="YihA_EngB"/>
    <property type="match status" value="1"/>
</dbReference>
<dbReference type="Gene3D" id="3.40.50.300">
    <property type="entry name" value="P-loop containing nucleotide triphosphate hydrolases"/>
    <property type="match status" value="1"/>
</dbReference>
<dbReference type="HAMAP" id="MF_00321">
    <property type="entry name" value="GTPase_EngB"/>
    <property type="match status" value="1"/>
</dbReference>
<dbReference type="InterPro" id="IPR030393">
    <property type="entry name" value="G_ENGB_dom"/>
</dbReference>
<dbReference type="InterPro" id="IPR006073">
    <property type="entry name" value="GTP-bd"/>
</dbReference>
<dbReference type="InterPro" id="IPR019987">
    <property type="entry name" value="GTP-bd_ribosome_bio_YsxC"/>
</dbReference>
<dbReference type="InterPro" id="IPR027417">
    <property type="entry name" value="P-loop_NTPase"/>
</dbReference>
<dbReference type="NCBIfam" id="TIGR03598">
    <property type="entry name" value="GTPase_YsxC"/>
    <property type="match status" value="1"/>
</dbReference>
<dbReference type="PANTHER" id="PTHR11649:SF13">
    <property type="entry name" value="ENGB-TYPE G DOMAIN-CONTAINING PROTEIN"/>
    <property type="match status" value="1"/>
</dbReference>
<dbReference type="PANTHER" id="PTHR11649">
    <property type="entry name" value="MSS1/TRME-RELATED GTP-BINDING PROTEIN"/>
    <property type="match status" value="1"/>
</dbReference>
<dbReference type="Pfam" id="PF01926">
    <property type="entry name" value="MMR_HSR1"/>
    <property type="match status" value="1"/>
</dbReference>
<dbReference type="SUPFAM" id="SSF52540">
    <property type="entry name" value="P-loop containing nucleoside triphosphate hydrolases"/>
    <property type="match status" value="1"/>
</dbReference>
<dbReference type="PROSITE" id="PS51706">
    <property type="entry name" value="G_ENGB"/>
    <property type="match status" value="1"/>
</dbReference>
<comment type="function">
    <text evidence="1">Necessary for normal cell division and for the maintenance of normal septation.</text>
</comment>
<comment type="cofactor">
    <cofactor evidence="1">
        <name>Mg(2+)</name>
        <dbReference type="ChEBI" id="CHEBI:18420"/>
    </cofactor>
</comment>
<comment type="similarity">
    <text evidence="1">Belongs to the TRAFAC class TrmE-Era-EngA-EngB-Septin-like GTPase superfamily. EngB GTPase family.</text>
</comment>
<reference key="1">
    <citation type="journal article" date="2005" name="PLoS Biol.">
        <title>The genome sequence of Rickettsia felis identifies the first putative conjugative plasmid in an obligate intracellular parasite.</title>
        <authorList>
            <person name="Ogata H."/>
            <person name="Renesto P."/>
            <person name="Audic S."/>
            <person name="Robert C."/>
            <person name="Blanc G."/>
            <person name="Fournier P.-E."/>
            <person name="Parinello H."/>
            <person name="Claverie J.-M."/>
            <person name="Raoult D."/>
        </authorList>
    </citation>
    <scope>NUCLEOTIDE SEQUENCE [LARGE SCALE GENOMIC DNA]</scope>
    <source>
        <strain>ATCC VR-1525 / URRWXCal2</strain>
    </source>
</reference>
<sequence>MTTQKIVHTKSPDGSKLFRHQAKFVAGAMNINQIPNFSLPEIAFVGKSNVGKSSLINTICNNKNLAKVSNTPGRTRQINFFNLADKLIIVDLPGYGFANVPISVKEQWEVLISYYLRNSYSLRLVNLLIDSRRGIKENDKKVAELLLANKREFQIIFTKSDKVTDRKNLNDEAQNFLATLNYSCNVMYVSSRSKEGARELKASLAKCIKPQR</sequence>
<organism>
    <name type="scientific">Rickettsia felis (strain ATCC VR-1525 / URRWXCal2)</name>
    <name type="common">Rickettsia azadi</name>
    <dbReference type="NCBI Taxonomy" id="315456"/>
    <lineage>
        <taxon>Bacteria</taxon>
        <taxon>Pseudomonadati</taxon>
        <taxon>Pseudomonadota</taxon>
        <taxon>Alphaproteobacteria</taxon>
        <taxon>Rickettsiales</taxon>
        <taxon>Rickettsiaceae</taxon>
        <taxon>Rickettsieae</taxon>
        <taxon>Rickettsia</taxon>
        <taxon>spotted fever group</taxon>
    </lineage>
</organism>
<feature type="chain" id="PRO_0000266936" description="Probable GTP-binding protein EngB">
    <location>
        <begin position="1"/>
        <end position="212"/>
    </location>
</feature>
<feature type="domain" description="EngB-type G" evidence="1">
    <location>
        <begin position="38"/>
        <end position="210"/>
    </location>
</feature>
<feature type="binding site" evidence="1">
    <location>
        <begin position="46"/>
        <end position="53"/>
    </location>
    <ligand>
        <name>GTP</name>
        <dbReference type="ChEBI" id="CHEBI:37565"/>
    </ligand>
</feature>
<feature type="binding site" evidence="1">
    <location>
        <position position="53"/>
    </location>
    <ligand>
        <name>Mg(2+)</name>
        <dbReference type="ChEBI" id="CHEBI:18420"/>
    </ligand>
</feature>
<feature type="binding site" evidence="1">
    <location>
        <begin position="73"/>
        <end position="77"/>
    </location>
    <ligand>
        <name>GTP</name>
        <dbReference type="ChEBI" id="CHEBI:37565"/>
    </ligand>
</feature>
<feature type="binding site" evidence="1">
    <location>
        <position position="75"/>
    </location>
    <ligand>
        <name>Mg(2+)</name>
        <dbReference type="ChEBI" id="CHEBI:18420"/>
    </ligand>
</feature>
<feature type="binding site" evidence="1">
    <location>
        <begin position="91"/>
        <end position="94"/>
    </location>
    <ligand>
        <name>GTP</name>
        <dbReference type="ChEBI" id="CHEBI:37565"/>
    </ligand>
</feature>
<feature type="binding site" evidence="1">
    <location>
        <begin position="158"/>
        <end position="161"/>
    </location>
    <ligand>
        <name>GTP</name>
        <dbReference type="ChEBI" id="CHEBI:37565"/>
    </ligand>
</feature>
<feature type="binding site" evidence="1">
    <location>
        <begin position="189"/>
        <end position="191"/>
    </location>
    <ligand>
        <name>GTP</name>
        <dbReference type="ChEBI" id="CHEBI:37565"/>
    </ligand>
</feature>
<gene>
    <name evidence="1" type="primary">engB</name>
    <name type="ordered locus">RF_0085</name>
</gene>
<evidence type="ECO:0000255" key="1">
    <source>
        <dbReference type="HAMAP-Rule" id="MF_00321"/>
    </source>
</evidence>
<name>ENGB_RICFE</name>
<accession>Q4UNC2</accession>
<protein>
    <recommendedName>
        <fullName evidence="1">Probable GTP-binding protein EngB</fullName>
    </recommendedName>
</protein>
<proteinExistence type="inferred from homology"/>
<keyword id="KW-0131">Cell cycle</keyword>
<keyword id="KW-0132">Cell division</keyword>
<keyword id="KW-0342">GTP-binding</keyword>
<keyword id="KW-0460">Magnesium</keyword>
<keyword id="KW-0479">Metal-binding</keyword>
<keyword id="KW-0547">Nucleotide-binding</keyword>
<keyword id="KW-0717">Septation</keyword>